<organism>
    <name type="scientific">Tityus trinitatis</name>
    <name type="common">Trinidad thick-tailed scorpion</name>
    <dbReference type="NCBI Taxonomy" id="288786"/>
    <lineage>
        <taxon>Eukaryota</taxon>
        <taxon>Metazoa</taxon>
        <taxon>Ecdysozoa</taxon>
        <taxon>Arthropoda</taxon>
        <taxon>Chelicerata</taxon>
        <taxon>Arachnida</taxon>
        <taxon>Scorpiones</taxon>
        <taxon>Buthida</taxon>
        <taxon>Buthoidea</taxon>
        <taxon>Buthidae</taxon>
        <taxon>Tityus</taxon>
    </lineage>
</organism>
<reference key="1">
    <citation type="journal article" date="2023" name="Antibiotics">
        <title>Identification of an antimicrobial peptide from the venom of the Trinidad thick-tailed scorpion Tityus trinitatis with potent activity against ESKAPE Pathogens and Clostridioides difficile.</title>
        <authorList>
            <person name="Mechkarska M."/>
            <person name="Cunning T.S."/>
            <person name="Taggart M.G."/>
            <person name="Ternan N.G."/>
            <person name="Leprince J."/>
            <person name="Coquet L."/>
            <person name="Jouenne T."/>
            <person name="Tena-Garces J."/>
            <person name="Calvete J.J."/>
            <person name="Conlon J.M."/>
        </authorList>
    </citation>
    <scope>PROTEIN SEQUENCE</scope>
    <scope>FUNCTION</scope>
    <scope>AMIDATION AT LYS-17</scope>
    <scope>SUBCELLULAR LOCATION</scope>
    <scope>MASS SPECTROMETRY</scope>
    <source>
        <tissue>Venom</tissue>
    </source>
</reference>
<dbReference type="GO" id="GO:0005576">
    <property type="term" value="C:extracellular region"/>
    <property type="evidence" value="ECO:0007669"/>
    <property type="project" value="UniProtKB-SubCell"/>
</dbReference>
<evidence type="ECO:0000269" key="1">
    <source>
    </source>
</evidence>
<evidence type="ECO:0000303" key="2">
    <source>
    </source>
</evidence>
<evidence type="ECO:0000305" key="3"/>
<evidence type="ECO:0000305" key="4">
    <source>
    </source>
</evidence>
<keyword id="KW-0027">Amidation</keyword>
<keyword id="KW-0903">Direct protein sequencing</keyword>
<keyword id="KW-0964">Secreted</keyword>
<sequence>IFGMIPGLIGGLISAFK</sequence>
<accession>P0DRB6</accession>
<comment type="function">
    <text evidence="1">Antimicrobial peptide with low to moderate activity against most of clinically relevant Gram-positive and Gram-negative microbial pathogens (P.aeruginosa (DSM 50071); MIC&gt;400 ug/mL, E.coli (DSM 787); MIC=100 ug/mL, K.pneumoniae (ATCC BAA 1705); MIC&gt;100 ug/mL, A.baumannii (DSM 30008); MIC=50 ug/mL, S.aureus (ATCC 43300); MIC=25 ug/mL, S.epidermidis (DSM 28319); MIC=25 ug/mL, E.faecalis (MF 06036); MIC=50 ug/mL, E.faecium (NCTC 12201); MIC=25 ug/mL, C.difficile (DSM 27147); MIC=25 ug/mL, C.difficile (ATCC BAA 1382); MIC=25 ug/mL). Has moderate hemolytic activity (LC(50)=31 ug/mL) against mouse erythrocytes.</text>
</comment>
<comment type="subcellular location">
    <subcellularLocation>
        <location evidence="1">Secreted</location>
    </subcellularLocation>
</comment>
<comment type="tissue specificity">
    <text evidence="4">Expressed by the venom gland.</text>
</comment>
<comment type="mass spectrometry"/>
<comment type="similarity">
    <text evidence="3">Belongs to the non-disulfide-bridged peptide (NDBP) superfamily. Short antimicrobial peptide (group 4) family.</text>
</comment>
<protein>
    <recommendedName>
        <fullName evidence="2">Peptide TtAP-2</fullName>
    </recommendedName>
</protein>
<name>NDB42_TITTI</name>
<feature type="peptide" id="PRO_0000459521" description="Peptide TtAP-2" evidence="1">
    <location>
        <begin position="1"/>
        <end position="17"/>
    </location>
</feature>
<feature type="modified residue" description="Lysine amide" evidence="1">
    <location>
        <position position="17"/>
    </location>
</feature>
<proteinExistence type="evidence at protein level"/>